<protein>
    <recommendedName>
        <fullName>Uncharacterized protein MJ0948</fullName>
    </recommendedName>
</protein>
<organism>
    <name type="scientific">Methanocaldococcus jannaschii (strain ATCC 43067 / DSM 2661 / JAL-1 / JCM 10045 / NBRC 100440)</name>
    <name type="common">Methanococcus jannaschii</name>
    <dbReference type="NCBI Taxonomy" id="243232"/>
    <lineage>
        <taxon>Archaea</taxon>
        <taxon>Methanobacteriati</taxon>
        <taxon>Methanobacteriota</taxon>
        <taxon>Methanomada group</taxon>
        <taxon>Methanococci</taxon>
        <taxon>Methanococcales</taxon>
        <taxon>Methanocaldococcaceae</taxon>
        <taxon>Methanocaldococcus</taxon>
    </lineage>
</organism>
<sequence length="191" mass="22423">MIFMKNSTEYPTLVEIKDKKGEMIEKGEAKLRDLNNIRVKLNELRTSNPDDLDTIAQLEEEESHLTSEVLKLDLSIKILEVVEYIIESNIFEDYWKIIEEKIPYEELLNIVVENGLSIKKTCMELYKLANIDDKNILKKIQNLPDDYPKETKEDPNLQNKYLSKIISRISRLKEFKSNLDEIVSDIISNMR</sequence>
<gene>
    <name type="ordered locus">MJ0948</name>
</gene>
<name>Y948_METJA</name>
<feature type="chain" id="PRO_0000107117" description="Uncharacterized protein MJ0948">
    <location>
        <begin position="1"/>
        <end position="191"/>
    </location>
</feature>
<dbReference type="EMBL" id="L77117">
    <property type="protein sequence ID" value="AAB98956.1"/>
    <property type="molecule type" value="Genomic_DNA"/>
</dbReference>
<dbReference type="PIR" id="D64418">
    <property type="entry name" value="D64418"/>
</dbReference>
<dbReference type="SMR" id="Q58358"/>
<dbReference type="STRING" id="243232.MJ_0948"/>
<dbReference type="PaxDb" id="243232-MJ_0948"/>
<dbReference type="EnsemblBacteria" id="AAB98956">
    <property type="protein sequence ID" value="AAB98956"/>
    <property type="gene ID" value="MJ_0948"/>
</dbReference>
<dbReference type="KEGG" id="mja:MJ_0948"/>
<dbReference type="eggNOG" id="arCOG08286">
    <property type="taxonomic scope" value="Archaea"/>
</dbReference>
<dbReference type="HOGENOM" id="CLU_123707_0_0_2"/>
<dbReference type="InParanoid" id="Q58358"/>
<dbReference type="Proteomes" id="UP000000805">
    <property type="component" value="Chromosome"/>
</dbReference>
<accession>Q58358</accession>
<keyword id="KW-1185">Reference proteome</keyword>
<reference key="1">
    <citation type="journal article" date="1996" name="Science">
        <title>Complete genome sequence of the methanogenic archaeon, Methanococcus jannaschii.</title>
        <authorList>
            <person name="Bult C.J."/>
            <person name="White O."/>
            <person name="Olsen G.J."/>
            <person name="Zhou L."/>
            <person name="Fleischmann R.D."/>
            <person name="Sutton G.G."/>
            <person name="Blake J.A."/>
            <person name="FitzGerald L.M."/>
            <person name="Clayton R.A."/>
            <person name="Gocayne J.D."/>
            <person name="Kerlavage A.R."/>
            <person name="Dougherty B.A."/>
            <person name="Tomb J.-F."/>
            <person name="Adams M.D."/>
            <person name="Reich C.I."/>
            <person name="Overbeek R."/>
            <person name="Kirkness E.F."/>
            <person name="Weinstock K.G."/>
            <person name="Merrick J.M."/>
            <person name="Glodek A."/>
            <person name="Scott J.L."/>
            <person name="Geoghagen N.S.M."/>
            <person name="Weidman J.F."/>
            <person name="Fuhrmann J.L."/>
            <person name="Nguyen D."/>
            <person name="Utterback T.R."/>
            <person name="Kelley J.M."/>
            <person name="Peterson J.D."/>
            <person name="Sadow P.W."/>
            <person name="Hanna M.C."/>
            <person name="Cotton M.D."/>
            <person name="Roberts K.M."/>
            <person name="Hurst M.A."/>
            <person name="Kaine B.P."/>
            <person name="Borodovsky M."/>
            <person name="Klenk H.-P."/>
            <person name="Fraser C.M."/>
            <person name="Smith H.O."/>
            <person name="Woese C.R."/>
            <person name="Venter J.C."/>
        </authorList>
    </citation>
    <scope>NUCLEOTIDE SEQUENCE [LARGE SCALE GENOMIC DNA]</scope>
    <source>
        <strain>ATCC 43067 / DSM 2661 / JAL-1 / JCM 10045 / NBRC 100440</strain>
    </source>
</reference>
<proteinExistence type="predicted"/>